<name>ARGB_CORU7</name>
<protein>
    <recommendedName>
        <fullName evidence="1">Acetylglutamate kinase</fullName>
        <ecNumber evidence="1">2.7.2.8</ecNumber>
    </recommendedName>
    <alternativeName>
        <fullName evidence="1">N-acetyl-L-glutamate 5-phosphotransferase</fullName>
    </alternativeName>
    <alternativeName>
        <fullName evidence="1">NAG kinase</fullName>
        <shortName evidence="1">NAGK</shortName>
    </alternativeName>
</protein>
<gene>
    <name evidence="1" type="primary">argB</name>
    <name type="ordered locus">cu1115</name>
</gene>
<feature type="chain" id="PRO_1000092854" description="Acetylglutamate kinase">
    <location>
        <begin position="1"/>
        <end position="304"/>
    </location>
</feature>
<feature type="binding site" evidence="1">
    <location>
        <begin position="75"/>
        <end position="76"/>
    </location>
    <ligand>
        <name>substrate</name>
    </ligand>
</feature>
<feature type="binding site" evidence="1">
    <location>
        <position position="97"/>
    </location>
    <ligand>
        <name>substrate</name>
    </ligand>
</feature>
<feature type="binding site" evidence="1">
    <location>
        <position position="196"/>
    </location>
    <ligand>
        <name>substrate</name>
    </ligand>
</feature>
<feature type="site" description="Transition state stabilizer" evidence="1">
    <location>
        <position position="40"/>
    </location>
</feature>
<feature type="site" description="Transition state stabilizer" evidence="1">
    <location>
        <position position="257"/>
    </location>
</feature>
<reference key="1">
    <citation type="journal article" date="2008" name="J. Biotechnol.">
        <title>The lifestyle of Corynebacterium urealyticum derived from its complete genome sequence established by pyrosequencing.</title>
        <authorList>
            <person name="Tauch A."/>
            <person name="Trost E."/>
            <person name="Tilker A."/>
            <person name="Ludewig U."/>
            <person name="Schneiker S."/>
            <person name="Goesmann A."/>
            <person name="Arnold W."/>
            <person name="Bekel T."/>
            <person name="Brinkrolf K."/>
            <person name="Brune I."/>
            <person name="Goetker S."/>
            <person name="Kalinowski J."/>
            <person name="Kamp P.-B."/>
            <person name="Lobo F.P."/>
            <person name="Viehoever P."/>
            <person name="Weisshaar B."/>
            <person name="Soriano F."/>
            <person name="Droege M."/>
            <person name="Puehler A."/>
        </authorList>
    </citation>
    <scope>NUCLEOTIDE SEQUENCE [LARGE SCALE GENOMIC DNA]</scope>
    <source>
        <strain>ATCC 43042 / DSM 7109</strain>
    </source>
</reference>
<accession>B1VH34</accession>
<proteinExistence type="inferred from homology"/>
<comment type="function">
    <text evidence="1">Catalyzes the ATP-dependent phosphorylation of N-acetyl-L-glutamate.</text>
</comment>
<comment type="catalytic activity">
    <reaction evidence="1">
        <text>N-acetyl-L-glutamate + ATP = N-acetyl-L-glutamyl 5-phosphate + ADP</text>
        <dbReference type="Rhea" id="RHEA:14629"/>
        <dbReference type="ChEBI" id="CHEBI:30616"/>
        <dbReference type="ChEBI" id="CHEBI:44337"/>
        <dbReference type="ChEBI" id="CHEBI:57936"/>
        <dbReference type="ChEBI" id="CHEBI:456216"/>
        <dbReference type="EC" id="2.7.2.8"/>
    </reaction>
</comment>
<comment type="pathway">
    <text evidence="1">Amino-acid biosynthesis; L-arginine biosynthesis; N(2)-acetyl-L-ornithine from L-glutamate: step 2/4.</text>
</comment>
<comment type="subcellular location">
    <subcellularLocation>
        <location evidence="1">Cytoplasm</location>
    </subcellularLocation>
</comment>
<comment type="similarity">
    <text evidence="1">Belongs to the acetylglutamate kinase family. ArgB subfamily.</text>
</comment>
<sequence length="304" mass="32505">MPKIHDSSCTSGLTPSQRSHVLAEALPWLLHYRDKIVVVKYGGNAMIDDELKRAFAADMVFLRAVGARPVVVHGGGPQINMMLDKVGLEGEFRGGFRVTSPEVMEYVRMVLFGKVGRELVGLINEHGPYAVGASGEDAGLFTAEKFQPEIEGELVDIGRVGSITDVDPTSLFDLIDAGRIPVVSTIAPDDDGLVYNINADTAAGALAGALDAERLVMLTNVPGLYTDWPNKDSLVSSLTPAELEELLPTLDSGMIPKMTACLDAIHNGVKAAHVIDGRVPHSVLLELMTEGGIGTMISSESYEH</sequence>
<keyword id="KW-0028">Amino-acid biosynthesis</keyword>
<keyword id="KW-0055">Arginine biosynthesis</keyword>
<keyword id="KW-0067">ATP-binding</keyword>
<keyword id="KW-0963">Cytoplasm</keyword>
<keyword id="KW-0418">Kinase</keyword>
<keyword id="KW-0547">Nucleotide-binding</keyword>
<keyword id="KW-1185">Reference proteome</keyword>
<keyword id="KW-0808">Transferase</keyword>
<organism>
    <name type="scientific">Corynebacterium urealyticum (strain ATCC 43042 / DSM 7109)</name>
    <dbReference type="NCBI Taxonomy" id="504474"/>
    <lineage>
        <taxon>Bacteria</taxon>
        <taxon>Bacillati</taxon>
        <taxon>Actinomycetota</taxon>
        <taxon>Actinomycetes</taxon>
        <taxon>Mycobacteriales</taxon>
        <taxon>Corynebacteriaceae</taxon>
        <taxon>Corynebacterium</taxon>
    </lineage>
</organism>
<evidence type="ECO:0000255" key="1">
    <source>
        <dbReference type="HAMAP-Rule" id="MF_00082"/>
    </source>
</evidence>
<dbReference type="EC" id="2.7.2.8" evidence="1"/>
<dbReference type="EMBL" id="AM942444">
    <property type="protein sequence ID" value="CAQ05075.1"/>
    <property type="molecule type" value="Genomic_DNA"/>
</dbReference>
<dbReference type="RefSeq" id="WP_012360363.1">
    <property type="nucleotide sequence ID" value="NC_010545.1"/>
</dbReference>
<dbReference type="SMR" id="B1VH34"/>
<dbReference type="STRING" id="504474.cu1115"/>
<dbReference type="GeneID" id="60603896"/>
<dbReference type="KEGG" id="cur:cu1115"/>
<dbReference type="eggNOG" id="COG0548">
    <property type="taxonomic scope" value="Bacteria"/>
</dbReference>
<dbReference type="HOGENOM" id="CLU_053680_0_1_11"/>
<dbReference type="UniPathway" id="UPA00068">
    <property type="reaction ID" value="UER00107"/>
</dbReference>
<dbReference type="Proteomes" id="UP000001727">
    <property type="component" value="Chromosome"/>
</dbReference>
<dbReference type="GO" id="GO:0005737">
    <property type="term" value="C:cytoplasm"/>
    <property type="evidence" value="ECO:0007669"/>
    <property type="project" value="UniProtKB-SubCell"/>
</dbReference>
<dbReference type="GO" id="GO:0003991">
    <property type="term" value="F:acetylglutamate kinase activity"/>
    <property type="evidence" value="ECO:0007669"/>
    <property type="project" value="UniProtKB-UniRule"/>
</dbReference>
<dbReference type="GO" id="GO:0005524">
    <property type="term" value="F:ATP binding"/>
    <property type="evidence" value="ECO:0007669"/>
    <property type="project" value="UniProtKB-UniRule"/>
</dbReference>
<dbReference type="GO" id="GO:0042450">
    <property type="term" value="P:arginine biosynthetic process via ornithine"/>
    <property type="evidence" value="ECO:0007669"/>
    <property type="project" value="UniProtKB-UniRule"/>
</dbReference>
<dbReference type="GO" id="GO:0006526">
    <property type="term" value="P:L-arginine biosynthetic process"/>
    <property type="evidence" value="ECO:0007669"/>
    <property type="project" value="UniProtKB-UniPathway"/>
</dbReference>
<dbReference type="CDD" id="cd04250">
    <property type="entry name" value="AAK_NAGK-C"/>
    <property type="match status" value="1"/>
</dbReference>
<dbReference type="FunFam" id="3.40.1160.10:FF:000004">
    <property type="entry name" value="Acetylglutamate kinase"/>
    <property type="match status" value="1"/>
</dbReference>
<dbReference type="Gene3D" id="3.40.1160.10">
    <property type="entry name" value="Acetylglutamate kinase-like"/>
    <property type="match status" value="1"/>
</dbReference>
<dbReference type="HAMAP" id="MF_00082">
    <property type="entry name" value="ArgB"/>
    <property type="match status" value="1"/>
</dbReference>
<dbReference type="InterPro" id="IPR036393">
    <property type="entry name" value="AceGlu_kinase-like_sf"/>
</dbReference>
<dbReference type="InterPro" id="IPR004662">
    <property type="entry name" value="AcgluKinase_fam"/>
</dbReference>
<dbReference type="InterPro" id="IPR037528">
    <property type="entry name" value="ArgB"/>
</dbReference>
<dbReference type="InterPro" id="IPR001048">
    <property type="entry name" value="Asp/Glu/Uridylate_kinase"/>
</dbReference>
<dbReference type="InterPro" id="IPR001057">
    <property type="entry name" value="Glu/AcGlu_kinase"/>
</dbReference>
<dbReference type="InterPro" id="IPR041727">
    <property type="entry name" value="NAGK-C"/>
</dbReference>
<dbReference type="NCBIfam" id="TIGR00761">
    <property type="entry name" value="argB"/>
    <property type="match status" value="1"/>
</dbReference>
<dbReference type="PANTHER" id="PTHR23342">
    <property type="entry name" value="N-ACETYLGLUTAMATE SYNTHASE"/>
    <property type="match status" value="1"/>
</dbReference>
<dbReference type="PANTHER" id="PTHR23342:SF0">
    <property type="entry name" value="N-ACETYLGLUTAMATE SYNTHASE, MITOCHONDRIAL"/>
    <property type="match status" value="1"/>
</dbReference>
<dbReference type="Pfam" id="PF00696">
    <property type="entry name" value="AA_kinase"/>
    <property type="match status" value="1"/>
</dbReference>
<dbReference type="PIRSF" id="PIRSF000728">
    <property type="entry name" value="NAGK"/>
    <property type="match status" value="1"/>
</dbReference>
<dbReference type="PRINTS" id="PR00474">
    <property type="entry name" value="GLU5KINASE"/>
</dbReference>
<dbReference type="SUPFAM" id="SSF53633">
    <property type="entry name" value="Carbamate kinase-like"/>
    <property type="match status" value="1"/>
</dbReference>